<reference key="1">
    <citation type="journal article" date="2005" name="Infect. Immun.">
        <title>Comparative genomic analysis of Chlamydia trachomatis oculotropic and genitotropic strains.</title>
        <authorList>
            <person name="Carlson J.H."/>
            <person name="Porcella S.F."/>
            <person name="McClarty G."/>
            <person name="Caldwell H.D."/>
        </authorList>
    </citation>
    <scope>NUCLEOTIDE SEQUENCE [LARGE SCALE GENOMIC DNA]</scope>
    <source>
        <strain>ATCC VR-571B / DSM 19440 / HAR-13</strain>
    </source>
</reference>
<protein>
    <recommendedName>
        <fullName evidence="1">Aspartyl/glutamyl-tRNA(Asn/Gln) amidotransferase subunit B</fullName>
        <shortName evidence="1">Asp/Glu-ADT subunit B</shortName>
        <ecNumber evidence="1">6.3.5.-</ecNumber>
    </recommendedName>
</protein>
<proteinExistence type="inferred from homology"/>
<name>GATB_CHLTA</name>
<dbReference type="EC" id="6.3.5.-" evidence="1"/>
<dbReference type="EMBL" id="CP000051">
    <property type="protein sequence ID" value="AAX50254.1"/>
    <property type="molecule type" value="Genomic_DNA"/>
</dbReference>
<dbReference type="RefSeq" id="WP_011324515.1">
    <property type="nucleotide sequence ID" value="NC_007429.1"/>
</dbReference>
<dbReference type="SMR" id="Q3KN18"/>
<dbReference type="KEGG" id="cta:CTA_0005"/>
<dbReference type="HOGENOM" id="CLU_019240_0_0_0"/>
<dbReference type="Proteomes" id="UP000002532">
    <property type="component" value="Chromosome"/>
</dbReference>
<dbReference type="GO" id="GO:0050566">
    <property type="term" value="F:asparaginyl-tRNA synthase (glutamine-hydrolyzing) activity"/>
    <property type="evidence" value="ECO:0007669"/>
    <property type="project" value="RHEA"/>
</dbReference>
<dbReference type="GO" id="GO:0005524">
    <property type="term" value="F:ATP binding"/>
    <property type="evidence" value="ECO:0007669"/>
    <property type="project" value="UniProtKB-KW"/>
</dbReference>
<dbReference type="GO" id="GO:0050567">
    <property type="term" value="F:glutaminyl-tRNA synthase (glutamine-hydrolyzing) activity"/>
    <property type="evidence" value="ECO:0007669"/>
    <property type="project" value="UniProtKB-UniRule"/>
</dbReference>
<dbReference type="GO" id="GO:0070681">
    <property type="term" value="P:glutaminyl-tRNAGln biosynthesis via transamidation"/>
    <property type="evidence" value="ECO:0007669"/>
    <property type="project" value="TreeGrafter"/>
</dbReference>
<dbReference type="GO" id="GO:0006412">
    <property type="term" value="P:translation"/>
    <property type="evidence" value="ECO:0007669"/>
    <property type="project" value="UniProtKB-UniRule"/>
</dbReference>
<dbReference type="FunFam" id="1.10.10.410:FF:000001">
    <property type="entry name" value="Aspartyl/glutamyl-tRNA(Asn/Gln) amidotransferase subunit B"/>
    <property type="match status" value="1"/>
</dbReference>
<dbReference type="Gene3D" id="1.10.10.410">
    <property type="match status" value="1"/>
</dbReference>
<dbReference type="Gene3D" id="1.10.150.380">
    <property type="entry name" value="GatB domain, N-terminal subdomain"/>
    <property type="match status" value="1"/>
</dbReference>
<dbReference type="HAMAP" id="MF_00121">
    <property type="entry name" value="GatB"/>
    <property type="match status" value="1"/>
</dbReference>
<dbReference type="InterPro" id="IPR017959">
    <property type="entry name" value="Asn/Gln-tRNA_amidoTrfase_suB/E"/>
</dbReference>
<dbReference type="InterPro" id="IPR006075">
    <property type="entry name" value="Asn/Gln-tRNA_Trfase_suB/E_cat"/>
</dbReference>
<dbReference type="InterPro" id="IPR018027">
    <property type="entry name" value="Asn/Gln_amidotransferase"/>
</dbReference>
<dbReference type="InterPro" id="IPR003789">
    <property type="entry name" value="Asn/Gln_tRNA_amidoTrase-B-like"/>
</dbReference>
<dbReference type="InterPro" id="IPR004413">
    <property type="entry name" value="GatB"/>
</dbReference>
<dbReference type="InterPro" id="IPR042114">
    <property type="entry name" value="GatB_C_1"/>
</dbReference>
<dbReference type="InterPro" id="IPR023168">
    <property type="entry name" value="GatB_Yqey_C_2"/>
</dbReference>
<dbReference type="InterPro" id="IPR017958">
    <property type="entry name" value="Gln-tRNA_amidoTrfase_suB_CS"/>
</dbReference>
<dbReference type="InterPro" id="IPR014746">
    <property type="entry name" value="Gln_synth/guanido_kin_cat_dom"/>
</dbReference>
<dbReference type="NCBIfam" id="TIGR00133">
    <property type="entry name" value="gatB"/>
    <property type="match status" value="1"/>
</dbReference>
<dbReference type="NCBIfam" id="NF004012">
    <property type="entry name" value="PRK05477.1-2"/>
    <property type="match status" value="1"/>
</dbReference>
<dbReference type="NCBIfam" id="NF004014">
    <property type="entry name" value="PRK05477.1-4"/>
    <property type="match status" value="1"/>
</dbReference>
<dbReference type="PANTHER" id="PTHR11659">
    <property type="entry name" value="GLUTAMYL-TRNA GLN AMIDOTRANSFERASE SUBUNIT B MITOCHONDRIAL AND PROKARYOTIC PET112-RELATED"/>
    <property type="match status" value="1"/>
</dbReference>
<dbReference type="PANTHER" id="PTHR11659:SF0">
    <property type="entry name" value="GLUTAMYL-TRNA(GLN) AMIDOTRANSFERASE SUBUNIT B, MITOCHONDRIAL"/>
    <property type="match status" value="1"/>
</dbReference>
<dbReference type="Pfam" id="PF02934">
    <property type="entry name" value="GatB_N"/>
    <property type="match status" value="1"/>
</dbReference>
<dbReference type="Pfam" id="PF02637">
    <property type="entry name" value="GatB_Yqey"/>
    <property type="match status" value="1"/>
</dbReference>
<dbReference type="SMART" id="SM00845">
    <property type="entry name" value="GatB_Yqey"/>
    <property type="match status" value="1"/>
</dbReference>
<dbReference type="SUPFAM" id="SSF89095">
    <property type="entry name" value="GatB/YqeY motif"/>
    <property type="match status" value="1"/>
</dbReference>
<dbReference type="SUPFAM" id="SSF55931">
    <property type="entry name" value="Glutamine synthetase/guanido kinase"/>
    <property type="match status" value="1"/>
</dbReference>
<dbReference type="PROSITE" id="PS01234">
    <property type="entry name" value="GATB"/>
    <property type="match status" value="1"/>
</dbReference>
<sequence>MGIAHTEWESVIGLEVHVELNTESKLFSPARNHFGDEPNTNISPVCTGMPGSLPVLNKDAVRKAVLFGCAVEGDVALFSRFDRKSYFYPDSPRNFQITQYEHPIVRGGCIRAVVEGEEKTFELAQTHLEDDAGMLKHFGDFAGVDYNRAGVPLIEIVSKPCMFSAEDAVAYANALVSILGYIGISDCNMEEGSIRFDVNISVRPRGSRELRNKVEIKNMNSFTFMAQALEAEKRRQIEEYLSYPNEDPKKVVPAATYRWDPEKKKTVLMRLKERAEDYMYFVEPDLPVLQITETYIDEVRQTLPELPHSKYMRYITDFDIAEDLAMILVSDRHTAHFFETATMSCKNYRALSNWITVEFAGRCKARGKTLPFTGILPEWVAQLVNFIDRGVITGKIAKEIADRMVSSFGESPEDILRRHPSLLPMTDDHALRAIVKEVVAQNTASVADYKNGKAKALGFLVGQIMKRTEGKAPPKRVNELLLAAMRDM</sequence>
<gene>
    <name evidence="1" type="primary">gatB</name>
    <name type="ordered locus">CTA_0005</name>
</gene>
<accession>Q3KN18</accession>
<evidence type="ECO:0000255" key="1">
    <source>
        <dbReference type="HAMAP-Rule" id="MF_00121"/>
    </source>
</evidence>
<organism>
    <name type="scientific">Chlamydia trachomatis serovar A (strain ATCC VR-571B / DSM 19440 / HAR-13)</name>
    <dbReference type="NCBI Taxonomy" id="315277"/>
    <lineage>
        <taxon>Bacteria</taxon>
        <taxon>Pseudomonadati</taxon>
        <taxon>Chlamydiota</taxon>
        <taxon>Chlamydiia</taxon>
        <taxon>Chlamydiales</taxon>
        <taxon>Chlamydiaceae</taxon>
        <taxon>Chlamydia/Chlamydophila group</taxon>
        <taxon>Chlamydia</taxon>
    </lineage>
</organism>
<feature type="chain" id="PRO_0000241208" description="Aspartyl/glutamyl-tRNA(Asn/Gln) amidotransferase subunit B">
    <location>
        <begin position="1"/>
        <end position="488"/>
    </location>
</feature>
<comment type="function">
    <text evidence="1">Allows the formation of correctly charged Asn-tRNA(Asn) or Gln-tRNA(Gln) through the transamidation of misacylated Asp-tRNA(Asn) or Glu-tRNA(Gln) in organisms which lack either or both of asparaginyl-tRNA or glutaminyl-tRNA synthetases. The reaction takes place in the presence of glutamine and ATP through an activated phospho-Asp-tRNA(Asn) or phospho-Glu-tRNA(Gln).</text>
</comment>
<comment type="catalytic activity">
    <reaction evidence="1">
        <text>L-glutamyl-tRNA(Gln) + L-glutamine + ATP + H2O = L-glutaminyl-tRNA(Gln) + L-glutamate + ADP + phosphate + H(+)</text>
        <dbReference type="Rhea" id="RHEA:17521"/>
        <dbReference type="Rhea" id="RHEA-COMP:9681"/>
        <dbReference type="Rhea" id="RHEA-COMP:9684"/>
        <dbReference type="ChEBI" id="CHEBI:15377"/>
        <dbReference type="ChEBI" id="CHEBI:15378"/>
        <dbReference type="ChEBI" id="CHEBI:29985"/>
        <dbReference type="ChEBI" id="CHEBI:30616"/>
        <dbReference type="ChEBI" id="CHEBI:43474"/>
        <dbReference type="ChEBI" id="CHEBI:58359"/>
        <dbReference type="ChEBI" id="CHEBI:78520"/>
        <dbReference type="ChEBI" id="CHEBI:78521"/>
        <dbReference type="ChEBI" id="CHEBI:456216"/>
    </reaction>
</comment>
<comment type="catalytic activity">
    <reaction evidence="1">
        <text>L-aspartyl-tRNA(Asn) + L-glutamine + ATP + H2O = L-asparaginyl-tRNA(Asn) + L-glutamate + ADP + phosphate + 2 H(+)</text>
        <dbReference type="Rhea" id="RHEA:14513"/>
        <dbReference type="Rhea" id="RHEA-COMP:9674"/>
        <dbReference type="Rhea" id="RHEA-COMP:9677"/>
        <dbReference type="ChEBI" id="CHEBI:15377"/>
        <dbReference type="ChEBI" id="CHEBI:15378"/>
        <dbReference type="ChEBI" id="CHEBI:29985"/>
        <dbReference type="ChEBI" id="CHEBI:30616"/>
        <dbReference type="ChEBI" id="CHEBI:43474"/>
        <dbReference type="ChEBI" id="CHEBI:58359"/>
        <dbReference type="ChEBI" id="CHEBI:78515"/>
        <dbReference type="ChEBI" id="CHEBI:78516"/>
        <dbReference type="ChEBI" id="CHEBI:456216"/>
    </reaction>
</comment>
<comment type="subunit">
    <text evidence="1">Heterotrimer of A, B and C subunits.</text>
</comment>
<comment type="similarity">
    <text evidence="1">Belongs to the GatB/GatE family. GatB subfamily.</text>
</comment>
<keyword id="KW-0067">ATP-binding</keyword>
<keyword id="KW-0436">Ligase</keyword>
<keyword id="KW-0547">Nucleotide-binding</keyword>
<keyword id="KW-0648">Protein biosynthesis</keyword>